<comment type="function">
    <text evidence="1">Catalyzes the conversion of GTP to 2,5-diamino-6-ribosylamino-4(3H)-pyrimidinone 5'-phosphate (DARP), formate and pyrophosphate.</text>
</comment>
<comment type="catalytic activity">
    <reaction evidence="1">
        <text>GTP + 4 H2O = 2,5-diamino-6-hydroxy-4-(5-phosphoribosylamino)-pyrimidine + formate + 2 phosphate + 3 H(+)</text>
        <dbReference type="Rhea" id="RHEA:23704"/>
        <dbReference type="ChEBI" id="CHEBI:15377"/>
        <dbReference type="ChEBI" id="CHEBI:15378"/>
        <dbReference type="ChEBI" id="CHEBI:15740"/>
        <dbReference type="ChEBI" id="CHEBI:37565"/>
        <dbReference type="ChEBI" id="CHEBI:43474"/>
        <dbReference type="ChEBI" id="CHEBI:58614"/>
        <dbReference type="EC" id="3.5.4.25"/>
    </reaction>
</comment>
<comment type="cofactor">
    <cofactor evidence="1">
        <name>Zn(2+)</name>
        <dbReference type="ChEBI" id="CHEBI:29105"/>
    </cofactor>
    <text evidence="1">Binds 1 zinc ion per subunit.</text>
</comment>
<comment type="pathway">
    <text evidence="1">Cofactor biosynthesis; riboflavin biosynthesis; 5-amino-6-(D-ribitylamino)uracil from GTP: step 1/4.</text>
</comment>
<comment type="similarity">
    <text evidence="1">Belongs to the GTP cyclohydrolase II family.</text>
</comment>
<proteinExistence type="inferred from homology"/>
<name>RIBA_TOLAT</name>
<sequence>MSSVSLVASAELPTPWGVFTMTGFKEEATGKDHVALSMGDITTDAPVLARIHSECLTGDALFSLRCDCGFQLQAALQRIAKEERGVLLYVRQEGRGIGLLNKIHAYHLQDQGADTVEANEALGFAPDLRDYTICADMLKLLDVKSLRLMTNNPRKIKAMEKYGIPVAERVPLEEGKNAYNEFYLATKAGKLGHMLHD</sequence>
<organism>
    <name type="scientific">Tolumonas auensis (strain DSM 9187 / NBRC 110442 / TA 4)</name>
    <dbReference type="NCBI Taxonomy" id="595494"/>
    <lineage>
        <taxon>Bacteria</taxon>
        <taxon>Pseudomonadati</taxon>
        <taxon>Pseudomonadota</taxon>
        <taxon>Gammaproteobacteria</taxon>
        <taxon>Aeromonadales</taxon>
        <taxon>Aeromonadaceae</taxon>
        <taxon>Tolumonas</taxon>
    </lineage>
</organism>
<reference key="1">
    <citation type="submission" date="2009-05" db="EMBL/GenBank/DDBJ databases">
        <title>Complete sequence of Tolumonas auensis DSM 9187.</title>
        <authorList>
            <consortium name="US DOE Joint Genome Institute"/>
            <person name="Lucas S."/>
            <person name="Copeland A."/>
            <person name="Lapidus A."/>
            <person name="Glavina del Rio T."/>
            <person name="Tice H."/>
            <person name="Bruce D."/>
            <person name="Goodwin L."/>
            <person name="Pitluck S."/>
            <person name="Chertkov O."/>
            <person name="Brettin T."/>
            <person name="Detter J.C."/>
            <person name="Han C."/>
            <person name="Larimer F."/>
            <person name="Land M."/>
            <person name="Hauser L."/>
            <person name="Kyrpides N."/>
            <person name="Mikhailova N."/>
            <person name="Spring S."/>
            <person name="Beller H."/>
        </authorList>
    </citation>
    <scope>NUCLEOTIDE SEQUENCE [LARGE SCALE GENOMIC DNA]</scope>
    <source>
        <strain>DSM 9187 / NBRC 110442 / TA 4</strain>
    </source>
</reference>
<dbReference type="EC" id="3.5.4.25" evidence="1"/>
<dbReference type="EMBL" id="CP001616">
    <property type="protein sequence ID" value="ACQ92885.1"/>
    <property type="molecule type" value="Genomic_DNA"/>
</dbReference>
<dbReference type="RefSeq" id="WP_012729484.1">
    <property type="nucleotide sequence ID" value="NC_012691.1"/>
</dbReference>
<dbReference type="SMR" id="C4LE64"/>
<dbReference type="STRING" id="595494.Tola_1268"/>
<dbReference type="KEGG" id="tau:Tola_1268"/>
<dbReference type="eggNOG" id="COG0807">
    <property type="taxonomic scope" value="Bacteria"/>
</dbReference>
<dbReference type="HOGENOM" id="CLU_020273_2_1_6"/>
<dbReference type="OrthoDB" id="9793111at2"/>
<dbReference type="UniPathway" id="UPA00275">
    <property type="reaction ID" value="UER00400"/>
</dbReference>
<dbReference type="Proteomes" id="UP000009073">
    <property type="component" value="Chromosome"/>
</dbReference>
<dbReference type="GO" id="GO:0005829">
    <property type="term" value="C:cytosol"/>
    <property type="evidence" value="ECO:0007669"/>
    <property type="project" value="TreeGrafter"/>
</dbReference>
<dbReference type="GO" id="GO:0005525">
    <property type="term" value="F:GTP binding"/>
    <property type="evidence" value="ECO:0007669"/>
    <property type="project" value="UniProtKB-KW"/>
</dbReference>
<dbReference type="GO" id="GO:0003935">
    <property type="term" value="F:GTP cyclohydrolase II activity"/>
    <property type="evidence" value="ECO:0007669"/>
    <property type="project" value="UniProtKB-UniRule"/>
</dbReference>
<dbReference type="GO" id="GO:0008270">
    <property type="term" value="F:zinc ion binding"/>
    <property type="evidence" value="ECO:0007669"/>
    <property type="project" value="UniProtKB-UniRule"/>
</dbReference>
<dbReference type="GO" id="GO:0009231">
    <property type="term" value="P:riboflavin biosynthetic process"/>
    <property type="evidence" value="ECO:0007669"/>
    <property type="project" value="UniProtKB-UniRule"/>
</dbReference>
<dbReference type="CDD" id="cd00641">
    <property type="entry name" value="GTP_cyclohydro2"/>
    <property type="match status" value="1"/>
</dbReference>
<dbReference type="FunFam" id="3.40.50.10990:FF:000002">
    <property type="entry name" value="GTP cyclohydrolase-2"/>
    <property type="match status" value="1"/>
</dbReference>
<dbReference type="Gene3D" id="3.40.50.10990">
    <property type="entry name" value="GTP cyclohydrolase II"/>
    <property type="match status" value="1"/>
</dbReference>
<dbReference type="HAMAP" id="MF_00179">
    <property type="entry name" value="RibA"/>
    <property type="match status" value="1"/>
</dbReference>
<dbReference type="InterPro" id="IPR032677">
    <property type="entry name" value="GTP_cyclohydro_II"/>
</dbReference>
<dbReference type="InterPro" id="IPR000926">
    <property type="entry name" value="RibA"/>
</dbReference>
<dbReference type="InterPro" id="IPR036144">
    <property type="entry name" value="RibA-like_sf"/>
</dbReference>
<dbReference type="NCBIfam" id="NF001591">
    <property type="entry name" value="PRK00393.1"/>
    <property type="match status" value="1"/>
</dbReference>
<dbReference type="NCBIfam" id="TIGR00505">
    <property type="entry name" value="ribA"/>
    <property type="match status" value="1"/>
</dbReference>
<dbReference type="PANTHER" id="PTHR21327:SF18">
    <property type="entry name" value="3,4-DIHYDROXY-2-BUTANONE 4-PHOSPHATE SYNTHASE"/>
    <property type="match status" value="1"/>
</dbReference>
<dbReference type="PANTHER" id="PTHR21327">
    <property type="entry name" value="GTP CYCLOHYDROLASE II-RELATED"/>
    <property type="match status" value="1"/>
</dbReference>
<dbReference type="Pfam" id="PF00925">
    <property type="entry name" value="GTP_cyclohydro2"/>
    <property type="match status" value="1"/>
</dbReference>
<dbReference type="SUPFAM" id="SSF142695">
    <property type="entry name" value="RibA-like"/>
    <property type="match status" value="1"/>
</dbReference>
<gene>
    <name evidence="1" type="primary">ribA</name>
    <name type="ordered locus">Tola_1268</name>
</gene>
<feature type="chain" id="PRO_1000203816" description="GTP cyclohydrolase-2">
    <location>
        <begin position="1"/>
        <end position="197"/>
    </location>
</feature>
<feature type="active site" description="Proton acceptor" evidence="1">
    <location>
        <position position="127"/>
    </location>
</feature>
<feature type="active site" description="Nucleophile" evidence="1">
    <location>
        <position position="129"/>
    </location>
</feature>
<feature type="binding site" evidence="1">
    <location>
        <begin position="50"/>
        <end position="54"/>
    </location>
    <ligand>
        <name>GTP</name>
        <dbReference type="ChEBI" id="CHEBI:37565"/>
    </ligand>
</feature>
<feature type="binding site" evidence="1">
    <location>
        <position position="55"/>
    </location>
    <ligand>
        <name>Zn(2+)</name>
        <dbReference type="ChEBI" id="CHEBI:29105"/>
        <note>catalytic</note>
    </ligand>
</feature>
<feature type="binding site" evidence="1">
    <location>
        <position position="66"/>
    </location>
    <ligand>
        <name>Zn(2+)</name>
        <dbReference type="ChEBI" id="CHEBI:29105"/>
        <note>catalytic</note>
    </ligand>
</feature>
<feature type="binding site" evidence="1">
    <location>
        <position position="68"/>
    </location>
    <ligand>
        <name>Zn(2+)</name>
        <dbReference type="ChEBI" id="CHEBI:29105"/>
        <note>catalytic</note>
    </ligand>
</feature>
<feature type="binding site" evidence="1">
    <location>
        <position position="71"/>
    </location>
    <ligand>
        <name>GTP</name>
        <dbReference type="ChEBI" id="CHEBI:37565"/>
    </ligand>
</feature>
<feature type="binding site" evidence="1">
    <location>
        <begin position="93"/>
        <end position="95"/>
    </location>
    <ligand>
        <name>GTP</name>
        <dbReference type="ChEBI" id="CHEBI:37565"/>
    </ligand>
</feature>
<feature type="binding site" evidence="1">
    <location>
        <position position="115"/>
    </location>
    <ligand>
        <name>GTP</name>
        <dbReference type="ChEBI" id="CHEBI:37565"/>
    </ligand>
</feature>
<feature type="binding site" evidence="1">
    <location>
        <position position="150"/>
    </location>
    <ligand>
        <name>GTP</name>
        <dbReference type="ChEBI" id="CHEBI:37565"/>
    </ligand>
</feature>
<feature type="binding site" evidence="1">
    <location>
        <position position="155"/>
    </location>
    <ligand>
        <name>GTP</name>
        <dbReference type="ChEBI" id="CHEBI:37565"/>
    </ligand>
</feature>
<evidence type="ECO:0000255" key="1">
    <source>
        <dbReference type="HAMAP-Rule" id="MF_00179"/>
    </source>
</evidence>
<accession>C4LE64</accession>
<keyword id="KW-0342">GTP-binding</keyword>
<keyword id="KW-0378">Hydrolase</keyword>
<keyword id="KW-0479">Metal-binding</keyword>
<keyword id="KW-0547">Nucleotide-binding</keyword>
<keyword id="KW-1185">Reference proteome</keyword>
<keyword id="KW-0686">Riboflavin biosynthesis</keyword>
<keyword id="KW-0862">Zinc</keyword>
<protein>
    <recommendedName>
        <fullName evidence="1">GTP cyclohydrolase-2</fullName>
        <ecNumber evidence="1">3.5.4.25</ecNumber>
    </recommendedName>
    <alternativeName>
        <fullName evidence="1">GTP cyclohydrolase II</fullName>
    </alternativeName>
</protein>